<evidence type="ECO:0000250" key="1"/>
<evidence type="ECO:0000255" key="2">
    <source>
        <dbReference type="PROSITE-ProRule" id="PRU00091"/>
    </source>
</evidence>
<evidence type="ECO:0000255" key="3">
    <source>
        <dbReference type="PROSITE-ProRule" id="PRU00213"/>
    </source>
</evidence>
<evidence type="ECO:0000255" key="4">
    <source>
        <dbReference type="PROSITE-ProRule" id="PRU00218"/>
    </source>
</evidence>
<evidence type="ECO:0000256" key="5">
    <source>
        <dbReference type="SAM" id="MobiDB-lite"/>
    </source>
</evidence>
<evidence type="ECO:0000305" key="6"/>
<reference key="1">
    <citation type="journal article" date="2005" name="Nature">
        <title>The genome sequence of the rice blast fungus Magnaporthe grisea.</title>
        <authorList>
            <person name="Dean R.A."/>
            <person name="Talbot N.J."/>
            <person name="Ebbole D.J."/>
            <person name="Farman M.L."/>
            <person name="Mitchell T.K."/>
            <person name="Orbach M.J."/>
            <person name="Thon M.R."/>
            <person name="Kulkarni R."/>
            <person name="Xu J.-R."/>
            <person name="Pan H."/>
            <person name="Read N.D."/>
            <person name="Lee Y.-H."/>
            <person name="Carbone I."/>
            <person name="Brown D."/>
            <person name="Oh Y.Y."/>
            <person name="Donofrio N."/>
            <person name="Jeong J.S."/>
            <person name="Soanes D.M."/>
            <person name="Djonovic S."/>
            <person name="Kolomiets E."/>
            <person name="Rehmeyer C."/>
            <person name="Li W."/>
            <person name="Harding M."/>
            <person name="Kim S."/>
            <person name="Lebrun M.-H."/>
            <person name="Bohnert H."/>
            <person name="Coughlan S."/>
            <person name="Butler J."/>
            <person name="Calvo S.E."/>
            <person name="Ma L.-J."/>
            <person name="Nicol R."/>
            <person name="Purcell S."/>
            <person name="Nusbaum C."/>
            <person name="Galagan J.E."/>
            <person name="Birren B.W."/>
        </authorList>
    </citation>
    <scope>NUCLEOTIDE SEQUENCE [LARGE SCALE GENOMIC DNA]</scope>
    <source>
        <strain>70-15 / ATCC MYA-4617 / FGSC 8958</strain>
    </source>
</reference>
<name>VPS27_PYRO7</name>
<organism>
    <name type="scientific">Pyricularia oryzae (strain 70-15 / ATCC MYA-4617 / FGSC 8958)</name>
    <name type="common">Rice blast fungus</name>
    <name type="synonym">Magnaporthe oryzae</name>
    <dbReference type="NCBI Taxonomy" id="242507"/>
    <lineage>
        <taxon>Eukaryota</taxon>
        <taxon>Fungi</taxon>
        <taxon>Dikarya</taxon>
        <taxon>Ascomycota</taxon>
        <taxon>Pezizomycotina</taxon>
        <taxon>Sordariomycetes</taxon>
        <taxon>Sordariomycetidae</taxon>
        <taxon>Magnaporthales</taxon>
        <taxon>Pyriculariaceae</taxon>
        <taxon>Pyricularia</taxon>
    </lineage>
</organism>
<keyword id="KW-0967">Endosome</keyword>
<keyword id="KW-0472">Membrane</keyword>
<keyword id="KW-0479">Metal-binding</keyword>
<keyword id="KW-1185">Reference proteome</keyword>
<keyword id="KW-0677">Repeat</keyword>
<keyword id="KW-0862">Zinc</keyword>
<keyword id="KW-0863">Zinc-finger</keyword>
<dbReference type="EMBL" id="CM001233">
    <property type="protein sequence ID" value="EHA52647.1"/>
    <property type="molecule type" value="Genomic_DNA"/>
</dbReference>
<dbReference type="RefSeq" id="XP_003712454.1">
    <property type="nucleotide sequence ID" value="XM_003712406.1"/>
</dbReference>
<dbReference type="SMR" id="A4QTV1"/>
<dbReference type="FunCoup" id="A4QTV1">
    <property type="interactions" value="103"/>
</dbReference>
<dbReference type="STRING" id="242507.A4QTV1"/>
<dbReference type="EnsemblFungi" id="MGG_04958T0">
    <property type="protein sequence ID" value="MGG_04958T0"/>
    <property type="gene ID" value="MGG_04958"/>
</dbReference>
<dbReference type="GeneID" id="2675537"/>
<dbReference type="KEGG" id="mgr:MGG_04958"/>
<dbReference type="VEuPathDB" id="FungiDB:MGG_04958"/>
<dbReference type="eggNOG" id="KOG1818">
    <property type="taxonomic scope" value="Eukaryota"/>
</dbReference>
<dbReference type="HOGENOM" id="CLU_011862_1_0_1"/>
<dbReference type="InParanoid" id="A4QTV1"/>
<dbReference type="OMA" id="DQQCSAK"/>
<dbReference type="OrthoDB" id="957735at2759"/>
<dbReference type="Proteomes" id="UP000009058">
    <property type="component" value="Chromosome 3"/>
</dbReference>
<dbReference type="GO" id="GO:0010008">
    <property type="term" value="C:endosome membrane"/>
    <property type="evidence" value="ECO:0007669"/>
    <property type="project" value="UniProtKB-SubCell"/>
</dbReference>
<dbReference type="GO" id="GO:0033565">
    <property type="term" value="C:ESCRT-0 complex"/>
    <property type="evidence" value="ECO:0007669"/>
    <property type="project" value="TreeGrafter"/>
</dbReference>
<dbReference type="GO" id="GO:0032266">
    <property type="term" value="F:phosphatidylinositol-3-phosphate binding"/>
    <property type="evidence" value="ECO:0007669"/>
    <property type="project" value="TreeGrafter"/>
</dbReference>
<dbReference type="GO" id="GO:0043130">
    <property type="term" value="F:ubiquitin binding"/>
    <property type="evidence" value="ECO:0007669"/>
    <property type="project" value="InterPro"/>
</dbReference>
<dbReference type="GO" id="GO:0008270">
    <property type="term" value="F:zinc ion binding"/>
    <property type="evidence" value="ECO:0007669"/>
    <property type="project" value="UniProtKB-KW"/>
</dbReference>
<dbReference type="GO" id="GO:0006623">
    <property type="term" value="P:protein targeting to vacuole"/>
    <property type="evidence" value="ECO:0007669"/>
    <property type="project" value="TreeGrafter"/>
</dbReference>
<dbReference type="GO" id="GO:0043328">
    <property type="term" value="P:protein transport to vacuole involved in ubiquitin-dependent protein catabolic process via the multivesicular body sorting pathway"/>
    <property type="evidence" value="ECO:0007669"/>
    <property type="project" value="TreeGrafter"/>
</dbReference>
<dbReference type="CDD" id="cd15735">
    <property type="entry name" value="FYVE_spVPS27p_like"/>
    <property type="match status" value="1"/>
</dbReference>
<dbReference type="CDD" id="cd21385">
    <property type="entry name" value="GAT_Vps27"/>
    <property type="match status" value="1"/>
</dbReference>
<dbReference type="CDD" id="cd16979">
    <property type="entry name" value="VHS_Vps27"/>
    <property type="match status" value="1"/>
</dbReference>
<dbReference type="FunFam" id="1.20.5.1940:FF:000001">
    <property type="entry name" value="Vacuolar protein sorting-associated protein 27"/>
    <property type="match status" value="1"/>
</dbReference>
<dbReference type="FunFam" id="1.25.40.90:FF:000031">
    <property type="entry name" value="Vacuolar protein sorting-associated protein 27"/>
    <property type="match status" value="1"/>
</dbReference>
<dbReference type="FunFam" id="3.30.40.10:FF:000161">
    <property type="entry name" value="Vacuolar protein sorting-associated protein 27"/>
    <property type="match status" value="1"/>
</dbReference>
<dbReference type="Gene3D" id="1.20.5.1940">
    <property type="match status" value="1"/>
</dbReference>
<dbReference type="Gene3D" id="1.25.40.90">
    <property type="match status" value="1"/>
</dbReference>
<dbReference type="Gene3D" id="6.10.140.100">
    <property type="match status" value="1"/>
</dbReference>
<dbReference type="Gene3D" id="3.30.40.10">
    <property type="entry name" value="Zinc/RING finger domain, C3HC4 (zinc finger)"/>
    <property type="match status" value="1"/>
</dbReference>
<dbReference type="InterPro" id="IPR008942">
    <property type="entry name" value="ENTH_VHS"/>
</dbReference>
<dbReference type="InterPro" id="IPR017073">
    <property type="entry name" value="HGS/VPS27"/>
</dbReference>
<dbReference type="InterPro" id="IPR003903">
    <property type="entry name" value="UIM_dom"/>
</dbReference>
<dbReference type="InterPro" id="IPR002014">
    <property type="entry name" value="VHS_dom"/>
</dbReference>
<dbReference type="InterPro" id="IPR049425">
    <property type="entry name" value="Vps27_GAT-like"/>
</dbReference>
<dbReference type="InterPro" id="IPR000306">
    <property type="entry name" value="Znf_FYVE"/>
</dbReference>
<dbReference type="InterPro" id="IPR017455">
    <property type="entry name" value="Znf_FYVE-rel"/>
</dbReference>
<dbReference type="InterPro" id="IPR011011">
    <property type="entry name" value="Znf_FYVE_PHD"/>
</dbReference>
<dbReference type="InterPro" id="IPR013083">
    <property type="entry name" value="Znf_RING/FYVE/PHD"/>
</dbReference>
<dbReference type="PANTHER" id="PTHR47794">
    <property type="entry name" value="VACUOLAR PROTEIN SORTING-ASSOCIATED PROTEIN 27"/>
    <property type="match status" value="1"/>
</dbReference>
<dbReference type="PANTHER" id="PTHR47794:SF1">
    <property type="entry name" value="VACUOLAR PROTEIN SORTING-ASSOCIATED PROTEIN 27"/>
    <property type="match status" value="1"/>
</dbReference>
<dbReference type="Pfam" id="PF01363">
    <property type="entry name" value="FYVE"/>
    <property type="match status" value="1"/>
</dbReference>
<dbReference type="Pfam" id="PF02809">
    <property type="entry name" value="UIM"/>
    <property type="match status" value="2"/>
</dbReference>
<dbReference type="Pfam" id="PF00790">
    <property type="entry name" value="VHS"/>
    <property type="match status" value="1"/>
</dbReference>
<dbReference type="Pfam" id="PF21356">
    <property type="entry name" value="Vps27_GAT-like"/>
    <property type="match status" value="1"/>
</dbReference>
<dbReference type="PIRSF" id="PIRSF036956">
    <property type="entry name" value="Hrs_Vps27"/>
    <property type="match status" value="1"/>
</dbReference>
<dbReference type="SMART" id="SM00064">
    <property type="entry name" value="FYVE"/>
    <property type="match status" value="1"/>
</dbReference>
<dbReference type="SMART" id="SM00726">
    <property type="entry name" value="UIM"/>
    <property type="match status" value="2"/>
</dbReference>
<dbReference type="SMART" id="SM00288">
    <property type="entry name" value="VHS"/>
    <property type="match status" value="1"/>
</dbReference>
<dbReference type="SUPFAM" id="SSF48464">
    <property type="entry name" value="ENTH/VHS domain"/>
    <property type="match status" value="1"/>
</dbReference>
<dbReference type="SUPFAM" id="SSF57903">
    <property type="entry name" value="FYVE/PHD zinc finger"/>
    <property type="match status" value="1"/>
</dbReference>
<dbReference type="PROSITE" id="PS50330">
    <property type="entry name" value="UIM"/>
    <property type="match status" value="1"/>
</dbReference>
<dbReference type="PROSITE" id="PS50179">
    <property type="entry name" value="VHS"/>
    <property type="match status" value="1"/>
</dbReference>
<dbReference type="PROSITE" id="PS50178">
    <property type="entry name" value="ZF_FYVE"/>
    <property type="match status" value="1"/>
</dbReference>
<gene>
    <name type="primary">VPS27</name>
    <name type="ORF">MGG_04958</name>
</gene>
<feature type="chain" id="PRO_0000292518" description="Vacuolar protein sorting-associated protein 27">
    <location>
        <begin position="1"/>
        <end position="713"/>
    </location>
</feature>
<feature type="domain" description="VHS" evidence="4">
    <location>
        <begin position="18"/>
        <end position="150"/>
    </location>
</feature>
<feature type="domain" description="UIM 1" evidence="3">
    <location>
        <begin position="274"/>
        <end position="293"/>
    </location>
</feature>
<feature type="domain" description="UIM 2" evidence="3">
    <location>
        <begin position="324"/>
        <end position="343"/>
    </location>
</feature>
<feature type="zinc finger region" description="FYVE-type; degenerate" evidence="2">
    <location>
        <begin position="168"/>
        <end position="228"/>
    </location>
</feature>
<feature type="region of interest" description="Disordered" evidence="5">
    <location>
        <begin position="230"/>
        <end position="270"/>
    </location>
</feature>
<feature type="region of interest" description="Disordered" evidence="5">
    <location>
        <begin position="294"/>
        <end position="326"/>
    </location>
</feature>
<feature type="region of interest" description="Disordered" evidence="5">
    <location>
        <begin position="473"/>
        <end position="597"/>
    </location>
</feature>
<feature type="region of interest" description="Disordered" evidence="5">
    <location>
        <begin position="612"/>
        <end position="704"/>
    </location>
</feature>
<feature type="compositionally biased region" description="Polar residues" evidence="5">
    <location>
        <begin position="303"/>
        <end position="320"/>
    </location>
</feature>
<feature type="compositionally biased region" description="Polar residues" evidence="5">
    <location>
        <begin position="475"/>
        <end position="486"/>
    </location>
</feature>
<feature type="compositionally biased region" description="Polar residues" evidence="5">
    <location>
        <begin position="535"/>
        <end position="547"/>
    </location>
</feature>
<feature type="compositionally biased region" description="Low complexity" evidence="5">
    <location>
        <begin position="549"/>
        <end position="578"/>
    </location>
</feature>
<feature type="compositionally biased region" description="Polar residues" evidence="5">
    <location>
        <begin position="585"/>
        <end position="597"/>
    </location>
</feature>
<feature type="compositionally biased region" description="Polar residues" evidence="5">
    <location>
        <begin position="624"/>
        <end position="638"/>
    </location>
</feature>
<feature type="compositionally biased region" description="Low complexity" evidence="5">
    <location>
        <begin position="640"/>
        <end position="651"/>
    </location>
</feature>
<feature type="compositionally biased region" description="Polar residues" evidence="5">
    <location>
        <begin position="659"/>
        <end position="688"/>
    </location>
</feature>
<proteinExistence type="inferred from homology"/>
<comment type="function">
    <text evidence="1">Component of the ESCRT-0 complex which is the sorting receptor for ubiquitinated cargo proteins at the multivesicular body (MVB) and recruits ESCRT-I to the MVB outer membrane.</text>
</comment>
<comment type="subunit">
    <text>Component of the ESCRT-0 complex composed of HSE1 and VPS27.</text>
</comment>
<comment type="subcellular location">
    <subcellularLocation>
        <location evidence="1">Endosome membrane</location>
        <topology evidence="1">Peripheral membrane protein</topology>
        <orientation evidence="1">Cytoplasmic side</orientation>
    </subcellularLocation>
</comment>
<comment type="domain">
    <text>The FYVE domain is involved in the binding to phosphatidylinositol 3-phosphate (PtdIns(3)P) which is required for the association to endosomal membranes.</text>
</comment>
<comment type="domain">
    <text evidence="1">Both IUM domains are necessary for efficient binding to ubiquitin.</text>
</comment>
<comment type="similarity">
    <text evidence="6">Belongs to the VPS27 family.</text>
</comment>
<protein>
    <recommendedName>
        <fullName>Vacuolar protein sorting-associated protein 27</fullName>
    </recommendedName>
</protein>
<sequence length="713" mass="78060">MMSWWSSGANTALDEQIEKATSSSLEDIALNLEISDVIRSKTVPPKDAMRSLKKRIGHKNPNTQLSALELTDTCVKNGGQHFLVEIASREFIDNLVSLLKATGPAAVNADVRARILGLIQSWAAVTQGRVELSYIGEVYKTLQHEGFQFPPKVAVATSMIDSSAPPEWTDSDVCMRCRTPFTFTNRKHHCRNCGSCFDQQCSSKSIPLPHLGIMQPVRVDDGCYAKVTDKSRGSGGAGAGAGYDRKSPSLYSSFPHKNRSSSAMQPRSARVDDGFDEDLKKALAMSLEEVKSHSRNYAPASNGVANSGQSKVNGDSSATKTVEEEDDDLKAAIAASLADMEEQKKKHSAVLHEQTHSTEAASASTFVPPKNDYELTPVEAENINLFATLVDRLQTQPPGTILREPQIQELYDSIGTLRPKLARTYGETMSKHDTLLDLHAKLATVVRYYDRMLEERLSKAYGQRNFAGYNMHVPRQTSSPYPSLQGPSAPANVPGESFYTGQPQHDYAEPSRQPSYPPQASGAQQQFHQYAPPHQASQPSEGWQPSHTPAPAAQYAGQPPQQSTESTHSHSSAHNHQNLAAPSAPDQSLPTPTTDPAASYYFNQQQVSALQTPVSVPAEPVQSPYPNLQQQPPAQYQHSPAPQGQAQQQKPPQQPQQPYWQHSASQNTALPTNHQPWPQVPNRQSASYVQEPLPSAPQHAPQKPVVEEALIEL</sequence>
<accession>A4QTV1</accession>
<accession>G4N3H2</accession>